<name>RL4_STAA3</name>
<protein>
    <recommendedName>
        <fullName evidence="1">Large ribosomal subunit protein uL4</fullName>
    </recommendedName>
    <alternativeName>
        <fullName evidence="3">50S ribosomal protein L4</fullName>
    </alternativeName>
</protein>
<organism>
    <name type="scientific">Staphylococcus aureus (strain USA300)</name>
    <dbReference type="NCBI Taxonomy" id="367830"/>
    <lineage>
        <taxon>Bacteria</taxon>
        <taxon>Bacillati</taxon>
        <taxon>Bacillota</taxon>
        <taxon>Bacilli</taxon>
        <taxon>Bacillales</taxon>
        <taxon>Staphylococcaceae</taxon>
        <taxon>Staphylococcus</taxon>
    </lineage>
</organism>
<dbReference type="EMBL" id="CP000255">
    <property type="protein sequence ID" value="ABD20643.1"/>
    <property type="molecule type" value="Genomic_DNA"/>
</dbReference>
<dbReference type="RefSeq" id="WP_000024827.1">
    <property type="nucleotide sequence ID" value="NZ_CP027476.1"/>
</dbReference>
<dbReference type="SMR" id="Q2FEP0"/>
<dbReference type="KEGG" id="saa:SAUSA300_2203"/>
<dbReference type="HOGENOM" id="CLU_041575_5_2_9"/>
<dbReference type="Proteomes" id="UP000001939">
    <property type="component" value="Chromosome"/>
</dbReference>
<dbReference type="GO" id="GO:1990904">
    <property type="term" value="C:ribonucleoprotein complex"/>
    <property type="evidence" value="ECO:0007669"/>
    <property type="project" value="UniProtKB-KW"/>
</dbReference>
<dbReference type="GO" id="GO:0005840">
    <property type="term" value="C:ribosome"/>
    <property type="evidence" value="ECO:0007669"/>
    <property type="project" value="UniProtKB-KW"/>
</dbReference>
<dbReference type="GO" id="GO:0019843">
    <property type="term" value="F:rRNA binding"/>
    <property type="evidence" value="ECO:0007669"/>
    <property type="project" value="UniProtKB-UniRule"/>
</dbReference>
<dbReference type="GO" id="GO:0003735">
    <property type="term" value="F:structural constituent of ribosome"/>
    <property type="evidence" value="ECO:0007669"/>
    <property type="project" value="InterPro"/>
</dbReference>
<dbReference type="GO" id="GO:0006412">
    <property type="term" value="P:translation"/>
    <property type="evidence" value="ECO:0007669"/>
    <property type="project" value="UniProtKB-UniRule"/>
</dbReference>
<dbReference type="FunFam" id="3.40.1370.10:FF:000003">
    <property type="entry name" value="50S ribosomal protein L4"/>
    <property type="match status" value="1"/>
</dbReference>
<dbReference type="Gene3D" id="3.40.1370.10">
    <property type="match status" value="1"/>
</dbReference>
<dbReference type="HAMAP" id="MF_01328_B">
    <property type="entry name" value="Ribosomal_uL4_B"/>
    <property type="match status" value="1"/>
</dbReference>
<dbReference type="InterPro" id="IPR002136">
    <property type="entry name" value="Ribosomal_uL4"/>
</dbReference>
<dbReference type="InterPro" id="IPR013005">
    <property type="entry name" value="Ribosomal_uL4-like"/>
</dbReference>
<dbReference type="InterPro" id="IPR023574">
    <property type="entry name" value="Ribosomal_uL4_dom_sf"/>
</dbReference>
<dbReference type="NCBIfam" id="TIGR03953">
    <property type="entry name" value="rplD_bact"/>
    <property type="match status" value="1"/>
</dbReference>
<dbReference type="PANTHER" id="PTHR10746">
    <property type="entry name" value="50S RIBOSOMAL PROTEIN L4"/>
    <property type="match status" value="1"/>
</dbReference>
<dbReference type="PANTHER" id="PTHR10746:SF6">
    <property type="entry name" value="LARGE RIBOSOMAL SUBUNIT PROTEIN UL4M"/>
    <property type="match status" value="1"/>
</dbReference>
<dbReference type="Pfam" id="PF00573">
    <property type="entry name" value="Ribosomal_L4"/>
    <property type="match status" value="1"/>
</dbReference>
<dbReference type="SUPFAM" id="SSF52166">
    <property type="entry name" value="Ribosomal protein L4"/>
    <property type="match status" value="1"/>
</dbReference>
<keyword id="KW-0687">Ribonucleoprotein</keyword>
<keyword id="KW-0689">Ribosomal protein</keyword>
<keyword id="KW-0694">RNA-binding</keyword>
<keyword id="KW-0699">rRNA-binding</keyword>
<feature type="chain" id="PRO_0000242442" description="Large ribosomal subunit protein uL4">
    <location>
        <begin position="1"/>
        <end position="207"/>
    </location>
</feature>
<feature type="region of interest" description="Disordered" evidence="2">
    <location>
        <begin position="50"/>
        <end position="76"/>
    </location>
</feature>
<gene>
    <name evidence="1" type="primary">rplD</name>
    <name type="ordered locus">SAUSA300_2203</name>
</gene>
<sequence>MANYDVLKLDGTKSGSIELSDAVFGIEPNNSVLFEAINLQRASLRQGTHAVKNRSAVSGGGRKPWKQKGTGRARQGTIRAPQWRGGGIVFGPTPRSYAYKMPKKMRRLALRSALSFKAQENGLTVVDAFNFEAPKTKEFKNVLSTLEQPKKVLVVTENEDVNVELSARNIPGVQVTTAQGLNVLDITNADSLVITEAAAKKVEEVLG</sequence>
<evidence type="ECO:0000255" key="1">
    <source>
        <dbReference type="HAMAP-Rule" id="MF_01328"/>
    </source>
</evidence>
<evidence type="ECO:0000256" key="2">
    <source>
        <dbReference type="SAM" id="MobiDB-lite"/>
    </source>
</evidence>
<evidence type="ECO:0000305" key="3"/>
<accession>Q2FEP0</accession>
<reference key="1">
    <citation type="journal article" date="2006" name="Lancet">
        <title>Complete genome sequence of USA300, an epidemic clone of community-acquired meticillin-resistant Staphylococcus aureus.</title>
        <authorList>
            <person name="Diep B.A."/>
            <person name="Gill S.R."/>
            <person name="Chang R.F."/>
            <person name="Phan T.H."/>
            <person name="Chen J.H."/>
            <person name="Davidson M.G."/>
            <person name="Lin F."/>
            <person name="Lin J."/>
            <person name="Carleton H.A."/>
            <person name="Mongodin E.F."/>
            <person name="Sensabaugh G.F."/>
            <person name="Perdreau-Remington F."/>
        </authorList>
    </citation>
    <scope>NUCLEOTIDE SEQUENCE [LARGE SCALE GENOMIC DNA]</scope>
    <source>
        <strain>USA300</strain>
    </source>
</reference>
<proteinExistence type="inferred from homology"/>
<comment type="function">
    <text evidence="1">One of the primary rRNA binding proteins, this protein initially binds near the 5'-end of the 23S rRNA. It is important during the early stages of 50S assembly. It makes multiple contacts with different domains of the 23S rRNA in the assembled 50S subunit and ribosome.</text>
</comment>
<comment type="function">
    <text evidence="1">Forms part of the polypeptide exit tunnel.</text>
</comment>
<comment type="subunit">
    <text evidence="1">Part of the 50S ribosomal subunit.</text>
</comment>
<comment type="similarity">
    <text evidence="1">Belongs to the universal ribosomal protein uL4 family.</text>
</comment>